<protein>
    <recommendedName>
        <fullName>Histamine N-methyltransferase</fullName>
        <shortName>HMT</shortName>
        <ecNumber evidence="1">2.1.1.8</ecNumber>
    </recommendedName>
</protein>
<name>HNMT_XENTR</name>
<organism>
    <name type="scientific">Xenopus tropicalis</name>
    <name type="common">Western clawed frog</name>
    <name type="synonym">Silurana tropicalis</name>
    <dbReference type="NCBI Taxonomy" id="8364"/>
    <lineage>
        <taxon>Eukaryota</taxon>
        <taxon>Metazoa</taxon>
        <taxon>Chordata</taxon>
        <taxon>Craniata</taxon>
        <taxon>Vertebrata</taxon>
        <taxon>Euteleostomi</taxon>
        <taxon>Amphibia</taxon>
        <taxon>Batrachia</taxon>
        <taxon>Anura</taxon>
        <taxon>Pipoidea</taxon>
        <taxon>Pipidae</taxon>
        <taxon>Xenopodinae</taxon>
        <taxon>Xenopus</taxon>
        <taxon>Silurana</taxon>
    </lineage>
</organism>
<feature type="chain" id="PRO_0000271428" description="Histamine N-methyltransferase">
    <location>
        <begin position="1"/>
        <end position="293"/>
    </location>
</feature>
<feature type="binding site" evidence="2">
    <location>
        <position position="28"/>
    </location>
    <ligand>
        <name>substrate</name>
    </ligand>
</feature>
<feature type="binding site" evidence="2">
    <location>
        <position position="60"/>
    </location>
    <ligand>
        <name>S-adenosyl-L-methionine</name>
        <dbReference type="ChEBI" id="CHEBI:59789"/>
    </ligand>
</feature>
<feature type="binding site" evidence="2">
    <location>
        <position position="89"/>
    </location>
    <ligand>
        <name>S-adenosyl-L-methionine</name>
        <dbReference type="ChEBI" id="CHEBI:59789"/>
    </ligand>
</feature>
<feature type="binding site" evidence="2">
    <location>
        <position position="94"/>
    </location>
    <ligand>
        <name>S-adenosyl-L-methionine</name>
        <dbReference type="ChEBI" id="CHEBI:59789"/>
    </ligand>
</feature>
<feature type="binding site" evidence="2">
    <location>
        <position position="120"/>
    </location>
    <ligand>
        <name>S-adenosyl-L-methionine</name>
        <dbReference type="ChEBI" id="CHEBI:59789"/>
    </ligand>
</feature>
<feature type="binding site" evidence="2">
    <location>
        <position position="142"/>
    </location>
    <ligand>
        <name>S-adenosyl-L-methionine</name>
        <dbReference type="ChEBI" id="CHEBI:59789"/>
    </ligand>
</feature>
<feature type="binding site" evidence="2">
    <location>
        <position position="283"/>
    </location>
    <ligand>
        <name>substrate</name>
    </ligand>
</feature>
<comment type="function">
    <text evidence="1">Inactivates histamine by N-methylation. Plays an important role in degrading histamine and in regulating the airway response to histamine.</text>
</comment>
<comment type="catalytic activity">
    <reaction evidence="1 2">
        <text>histamine + S-adenosyl-L-methionine = N(tau)-methylhistamine + S-adenosyl-L-homocysteine + H(+)</text>
        <dbReference type="Rhea" id="RHEA:19301"/>
        <dbReference type="ChEBI" id="CHEBI:15378"/>
        <dbReference type="ChEBI" id="CHEBI:57856"/>
        <dbReference type="ChEBI" id="CHEBI:58432"/>
        <dbReference type="ChEBI" id="CHEBI:58600"/>
        <dbReference type="ChEBI" id="CHEBI:59789"/>
        <dbReference type="EC" id="2.1.1.8"/>
    </reaction>
</comment>
<comment type="subunit">
    <text evidence="1">Monomer.</text>
</comment>
<comment type="subcellular location">
    <subcellularLocation>
        <location evidence="1">Cytoplasm</location>
    </subcellularLocation>
</comment>
<comment type="similarity">
    <text evidence="2">Belongs to the class I-like SAM-binding methyltransferase superfamily. HNMT family.</text>
</comment>
<evidence type="ECO:0000250" key="1">
    <source>
        <dbReference type="UniProtKB" id="P50135"/>
    </source>
</evidence>
<evidence type="ECO:0000255" key="2">
    <source>
        <dbReference type="PROSITE-ProRule" id="PRU00929"/>
    </source>
</evidence>
<reference key="1">
    <citation type="submission" date="2006-08" db="EMBL/GenBank/DDBJ databases">
        <authorList>
            <consortium name="NIH - Xenopus Gene Collection (XGC) project"/>
        </authorList>
    </citation>
    <scope>NUCLEOTIDE SEQUENCE [LARGE SCALE MRNA]</scope>
    <source>
        <tissue>Testis</tissue>
    </source>
</reference>
<dbReference type="EC" id="2.1.1.8" evidence="1"/>
<dbReference type="EMBL" id="BC121451">
    <property type="protein sequence ID" value="AAI21452.1"/>
    <property type="molecule type" value="mRNA"/>
</dbReference>
<dbReference type="RefSeq" id="NP_001072355.1">
    <property type="nucleotide sequence ID" value="NM_001078887.1"/>
</dbReference>
<dbReference type="SMR" id="Q0V9P1"/>
<dbReference type="FunCoup" id="Q0V9P1">
    <property type="interactions" value="953"/>
</dbReference>
<dbReference type="STRING" id="8364.ENSXETP00000047040"/>
<dbReference type="PaxDb" id="8364-ENSXETP00000032543"/>
<dbReference type="DNASU" id="779808"/>
<dbReference type="GeneID" id="779808"/>
<dbReference type="KEGG" id="xtr:779808"/>
<dbReference type="AGR" id="Xenbase:XB-GENE-1001069"/>
<dbReference type="CTD" id="3176"/>
<dbReference type="Xenbase" id="XB-GENE-1001069">
    <property type="gene designation" value="hnmt"/>
</dbReference>
<dbReference type="eggNOG" id="ENOG502QQJ1">
    <property type="taxonomic scope" value="Eukaryota"/>
</dbReference>
<dbReference type="InParanoid" id="Q0V9P1"/>
<dbReference type="OMA" id="KNIKFAW"/>
<dbReference type="OrthoDB" id="5984880at2759"/>
<dbReference type="Proteomes" id="UP000008143">
    <property type="component" value="Chromosome 9"/>
</dbReference>
<dbReference type="GO" id="GO:0005737">
    <property type="term" value="C:cytoplasm"/>
    <property type="evidence" value="ECO:0000250"/>
    <property type="project" value="UniProtKB"/>
</dbReference>
<dbReference type="GO" id="GO:0046539">
    <property type="term" value="F:histamine N-methyltransferase activity"/>
    <property type="evidence" value="ECO:0000250"/>
    <property type="project" value="UniProtKB"/>
</dbReference>
<dbReference type="GO" id="GO:0001695">
    <property type="term" value="P:histamine catabolic process"/>
    <property type="evidence" value="ECO:0000250"/>
    <property type="project" value="UniProtKB"/>
</dbReference>
<dbReference type="GO" id="GO:0032259">
    <property type="term" value="P:methylation"/>
    <property type="evidence" value="ECO:0000250"/>
    <property type="project" value="UniProtKB"/>
</dbReference>
<dbReference type="CDD" id="cd02440">
    <property type="entry name" value="AdoMet_MTases"/>
    <property type="match status" value="1"/>
</dbReference>
<dbReference type="FunFam" id="3.40.50.150:FF:000118">
    <property type="entry name" value="Histamine N-methyltransferase"/>
    <property type="match status" value="1"/>
</dbReference>
<dbReference type="Gene3D" id="3.40.50.150">
    <property type="entry name" value="Vaccinia Virus protein VP39"/>
    <property type="match status" value="1"/>
</dbReference>
<dbReference type="InterPro" id="IPR016673">
    <property type="entry name" value="HHMT-like"/>
</dbReference>
<dbReference type="InterPro" id="IPR029063">
    <property type="entry name" value="SAM-dependent_MTases_sf"/>
</dbReference>
<dbReference type="Pfam" id="PF13489">
    <property type="entry name" value="Methyltransf_23"/>
    <property type="match status" value="1"/>
</dbReference>
<dbReference type="PIRSF" id="PIRSF016616">
    <property type="entry name" value="HHMT"/>
    <property type="match status" value="1"/>
</dbReference>
<dbReference type="SUPFAM" id="SSF53335">
    <property type="entry name" value="S-adenosyl-L-methionine-dependent methyltransferases"/>
    <property type="match status" value="1"/>
</dbReference>
<dbReference type="PROSITE" id="PS51597">
    <property type="entry name" value="SAM_HNMT"/>
    <property type="match status" value="1"/>
</dbReference>
<proteinExistence type="evidence at transcript level"/>
<keyword id="KW-0963">Cytoplasm</keyword>
<keyword id="KW-0489">Methyltransferase</keyword>
<keyword id="KW-1185">Reference proteome</keyword>
<keyword id="KW-0949">S-adenosyl-L-methionine</keyword>
<keyword id="KW-0808">Transferase</keyword>
<sequence length="293" mass="33115">MDSGLRSLLSDHSRYVESFRLFLLNSTEHQCMQRFIDTQFPHIVSSIGKDKSVIDILGIGSGSGEIDLQMIGKIQSRHPGVAISNQIVEPSAEQIIGYKERVAKAPNLGAVSFSWHRQTSSEYERQVNEEKQMRSYDFIHMIQMLYYVKDVPATLRFFKSCLAPNGKLLIILVSGNSGWSMLWKKHGPQLPLNDLCLYVTAGDIAQMLSSMGARFQSYELPSDMDITECFIEGDRNGEMLLDFLTETCDFKRNAPADLREQILCDLKSPECSTTRDGKVIFNNNLSVIVVERD</sequence>
<gene>
    <name type="primary">hnmt</name>
</gene>
<accession>Q0V9P1</accession>